<organism>
    <name type="scientific">Bacillus subtilis (strain 168)</name>
    <dbReference type="NCBI Taxonomy" id="224308"/>
    <lineage>
        <taxon>Bacteria</taxon>
        <taxon>Bacillati</taxon>
        <taxon>Bacillota</taxon>
        <taxon>Bacilli</taxon>
        <taxon>Bacillales</taxon>
        <taxon>Bacillaceae</taxon>
        <taxon>Bacillus</taxon>
    </lineage>
</organism>
<reference key="1">
    <citation type="submission" date="1996-08" db="EMBL/GenBank/DDBJ databases">
        <title>Sequencing of a 26 kb region of the Bacillus subtilis genome downstream of spoVJ.</title>
        <authorList>
            <person name="Borchert S."/>
            <person name="Klein C."/>
            <person name="Piksa B."/>
            <person name="Hammelmann M."/>
            <person name="Entian K.-D."/>
        </authorList>
    </citation>
    <scope>NUCLEOTIDE SEQUENCE [GENOMIC DNA]</scope>
</reference>
<reference key="2">
    <citation type="journal article" date="1997" name="Nature">
        <title>The complete genome sequence of the Gram-positive bacterium Bacillus subtilis.</title>
        <authorList>
            <person name="Kunst F."/>
            <person name="Ogasawara N."/>
            <person name="Moszer I."/>
            <person name="Albertini A.M."/>
            <person name="Alloni G."/>
            <person name="Azevedo V."/>
            <person name="Bertero M.G."/>
            <person name="Bessieres P."/>
            <person name="Bolotin A."/>
            <person name="Borchert S."/>
            <person name="Borriss R."/>
            <person name="Boursier L."/>
            <person name="Brans A."/>
            <person name="Braun M."/>
            <person name="Brignell S.C."/>
            <person name="Bron S."/>
            <person name="Brouillet S."/>
            <person name="Bruschi C.V."/>
            <person name="Caldwell B."/>
            <person name="Capuano V."/>
            <person name="Carter N.M."/>
            <person name="Choi S.-K."/>
            <person name="Codani J.-J."/>
            <person name="Connerton I.F."/>
            <person name="Cummings N.J."/>
            <person name="Daniel R.A."/>
            <person name="Denizot F."/>
            <person name="Devine K.M."/>
            <person name="Duesterhoeft A."/>
            <person name="Ehrlich S.D."/>
            <person name="Emmerson P.T."/>
            <person name="Entian K.-D."/>
            <person name="Errington J."/>
            <person name="Fabret C."/>
            <person name="Ferrari E."/>
            <person name="Foulger D."/>
            <person name="Fritz C."/>
            <person name="Fujita M."/>
            <person name="Fujita Y."/>
            <person name="Fuma S."/>
            <person name="Galizzi A."/>
            <person name="Galleron N."/>
            <person name="Ghim S.-Y."/>
            <person name="Glaser P."/>
            <person name="Goffeau A."/>
            <person name="Golightly E.J."/>
            <person name="Grandi G."/>
            <person name="Guiseppi G."/>
            <person name="Guy B.J."/>
            <person name="Haga K."/>
            <person name="Haiech J."/>
            <person name="Harwood C.R."/>
            <person name="Henaut A."/>
            <person name="Hilbert H."/>
            <person name="Holsappel S."/>
            <person name="Hosono S."/>
            <person name="Hullo M.-F."/>
            <person name="Itaya M."/>
            <person name="Jones L.-M."/>
            <person name="Joris B."/>
            <person name="Karamata D."/>
            <person name="Kasahara Y."/>
            <person name="Klaerr-Blanchard M."/>
            <person name="Klein C."/>
            <person name="Kobayashi Y."/>
            <person name="Koetter P."/>
            <person name="Koningstein G."/>
            <person name="Krogh S."/>
            <person name="Kumano M."/>
            <person name="Kurita K."/>
            <person name="Lapidus A."/>
            <person name="Lardinois S."/>
            <person name="Lauber J."/>
            <person name="Lazarevic V."/>
            <person name="Lee S.-M."/>
            <person name="Levine A."/>
            <person name="Liu H."/>
            <person name="Masuda S."/>
            <person name="Mauel C."/>
            <person name="Medigue C."/>
            <person name="Medina N."/>
            <person name="Mellado R.P."/>
            <person name="Mizuno M."/>
            <person name="Moestl D."/>
            <person name="Nakai S."/>
            <person name="Noback M."/>
            <person name="Noone D."/>
            <person name="O'Reilly M."/>
            <person name="Ogawa K."/>
            <person name="Ogiwara A."/>
            <person name="Oudega B."/>
            <person name="Park S.-H."/>
            <person name="Parro V."/>
            <person name="Pohl T.M."/>
            <person name="Portetelle D."/>
            <person name="Porwollik S."/>
            <person name="Prescott A.M."/>
            <person name="Presecan E."/>
            <person name="Pujic P."/>
            <person name="Purnelle B."/>
            <person name="Rapoport G."/>
            <person name="Rey M."/>
            <person name="Reynolds S."/>
            <person name="Rieger M."/>
            <person name="Rivolta C."/>
            <person name="Rocha E."/>
            <person name="Roche B."/>
            <person name="Rose M."/>
            <person name="Sadaie Y."/>
            <person name="Sato T."/>
            <person name="Scanlan E."/>
            <person name="Schleich S."/>
            <person name="Schroeter R."/>
            <person name="Scoffone F."/>
            <person name="Sekiguchi J."/>
            <person name="Sekowska A."/>
            <person name="Seror S.J."/>
            <person name="Serror P."/>
            <person name="Shin B.-S."/>
            <person name="Soldo B."/>
            <person name="Sorokin A."/>
            <person name="Tacconi E."/>
            <person name="Takagi T."/>
            <person name="Takahashi H."/>
            <person name="Takemaru K."/>
            <person name="Takeuchi M."/>
            <person name="Tamakoshi A."/>
            <person name="Tanaka T."/>
            <person name="Terpstra P."/>
            <person name="Tognoni A."/>
            <person name="Tosato V."/>
            <person name="Uchiyama S."/>
            <person name="Vandenbol M."/>
            <person name="Vannier F."/>
            <person name="Vassarotti A."/>
            <person name="Viari A."/>
            <person name="Wambutt R."/>
            <person name="Wedler E."/>
            <person name="Wedler H."/>
            <person name="Weitzenegger T."/>
            <person name="Winters P."/>
            <person name="Wipat A."/>
            <person name="Yamamoto H."/>
            <person name="Yamane K."/>
            <person name="Yasumoto K."/>
            <person name="Yata K."/>
            <person name="Yoshida K."/>
            <person name="Yoshikawa H.-F."/>
            <person name="Zumstein E."/>
            <person name="Yoshikawa H."/>
            <person name="Danchin A."/>
        </authorList>
    </citation>
    <scope>NUCLEOTIDE SEQUENCE [LARGE SCALE GENOMIC DNA]</scope>
    <source>
        <strain>168</strain>
    </source>
</reference>
<reference key="3">
    <citation type="journal article" date="2009" name="Microbiology">
        <title>From a consortium sequence to a unified sequence: the Bacillus subtilis 168 reference genome a decade later.</title>
        <authorList>
            <person name="Barbe V."/>
            <person name="Cruveiller S."/>
            <person name="Kunst F."/>
            <person name="Lenoble P."/>
            <person name="Meurice G."/>
            <person name="Sekowska A."/>
            <person name="Vallenet D."/>
            <person name="Wang T."/>
            <person name="Moszer I."/>
            <person name="Medigue C."/>
            <person name="Danchin A."/>
        </authorList>
    </citation>
    <scope>SEQUENCE REVISION TO 517</scope>
</reference>
<reference key="4">
    <citation type="journal article" date="1983" name="J. Bacteriol.">
        <title>Genes controlling xylan utilization by Bacillus subtilis.</title>
        <authorList>
            <person name="Roncero M.I."/>
        </authorList>
    </citation>
    <scope>CATALYTIC ACTIVITY</scope>
    <scope>SUBCELLULAR LOCATION</scope>
</reference>
<reference key="5">
    <citation type="journal article" date="1999" name="J. Mol. Biol.">
        <title>Phosphorylation of either crh or HPr mediates binding of CcpA to the bacillus subtilis xyn cre and catabolite repression of the xyn operon.</title>
        <authorList>
            <person name="Galinier A."/>
            <person name="Deutscher J."/>
            <person name="Martin-Verstraete I."/>
        </authorList>
    </citation>
    <scope>INDUCTION</scope>
</reference>
<reference key="6">
    <citation type="submission" date="2005-01" db="PDB data bank">
        <title>Crystal structure of beta-1,4-xylosidase from Bacillus subtilis.</title>
        <authorList>
            <consortium name="New York structural genomics research consortium (NYSGRC)"/>
        </authorList>
    </citation>
    <scope>X-RAY CRYSTALLOGRAPHY (1.80 ANGSTROMS)</scope>
    <scope>SUBUNIT</scope>
</reference>
<accession>P94489</accession>
<accession>Q796H4</accession>
<evidence type="ECO:0000250" key="1">
    <source>
        <dbReference type="UniProtKB" id="A7LXU0"/>
    </source>
</evidence>
<evidence type="ECO:0000269" key="2">
    <source>
    </source>
</evidence>
<evidence type="ECO:0000269" key="3">
    <source>
    </source>
</evidence>
<evidence type="ECO:0000305" key="4"/>
<evidence type="ECO:0000305" key="5">
    <source>
    </source>
</evidence>
<evidence type="ECO:0000305" key="6">
    <source ref="6"/>
</evidence>
<evidence type="ECO:0007829" key="7">
    <source>
        <dbReference type="PDB" id="1YIF"/>
    </source>
</evidence>
<feature type="chain" id="PRO_0000360522" description="Beta-xylosidase">
    <location>
        <begin position="1"/>
        <end position="533"/>
    </location>
</feature>
<feature type="active site" description="Proton acceptor" evidence="1">
    <location>
        <position position="14"/>
    </location>
</feature>
<feature type="active site" description="Proton donor" evidence="1">
    <location>
        <position position="186"/>
    </location>
</feature>
<feature type="site" description="Important for catalytic activity, responsible for pKa modulation of the active site Glu and correct orientation of both the proton donor and substrate" evidence="1">
    <location>
        <position position="127"/>
    </location>
</feature>
<feature type="sequence conflict" description="In Ref. 1; AAB41091." evidence="4" ref="1">
    <original>S</original>
    <variation>G</variation>
    <location>
        <position position="517"/>
    </location>
</feature>
<feature type="strand" evidence="7">
    <location>
        <begin position="3"/>
        <end position="5"/>
    </location>
</feature>
<feature type="strand" evidence="7">
    <location>
        <begin position="16"/>
        <end position="20"/>
    </location>
</feature>
<feature type="strand" evidence="7">
    <location>
        <begin position="23"/>
        <end position="28"/>
    </location>
</feature>
<feature type="strand" evidence="7">
    <location>
        <begin position="33"/>
        <end position="36"/>
    </location>
</feature>
<feature type="strand" evidence="7">
    <location>
        <begin position="38"/>
        <end position="52"/>
    </location>
</feature>
<feature type="turn" evidence="7">
    <location>
        <begin position="58"/>
        <end position="60"/>
    </location>
</feature>
<feature type="strand" evidence="7">
    <location>
        <begin position="76"/>
        <end position="80"/>
    </location>
</feature>
<feature type="strand" evidence="7">
    <location>
        <begin position="83"/>
        <end position="91"/>
    </location>
</feature>
<feature type="strand" evidence="7">
    <location>
        <begin position="95"/>
        <end position="97"/>
    </location>
</feature>
<feature type="strand" evidence="7">
    <location>
        <begin position="101"/>
        <end position="110"/>
    </location>
</feature>
<feature type="strand" evidence="7">
    <location>
        <begin position="129"/>
        <end position="132"/>
    </location>
</feature>
<feature type="strand" evidence="7">
    <location>
        <begin position="138"/>
        <end position="145"/>
    </location>
</feature>
<feature type="strand" evidence="7">
    <location>
        <begin position="153"/>
        <end position="163"/>
    </location>
</feature>
<feature type="turn" evidence="7">
    <location>
        <begin position="164"/>
        <end position="167"/>
    </location>
</feature>
<feature type="strand" evidence="7">
    <location>
        <begin position="174"/>
        <end position="177"/>
    </location>
</feature>
<feature type="strand" evidence="7">
    <location>
        <begin position="186"/>
        <end position="193"/>
    </location>
</feature>
<feature type="strand" evidence="7">
    <location>
        <begin position="196"/>
        <end position="204"/>
    </location>
</feature>
<feature type="strand" evidence="7">
    <location>
        <begin position="211"/>
        <end position="219"/>
    </location>
</feature>
<feature type="strand" evidence="7">
    <location>
        <begin position="232"/>
        <end position="234"/>
    </location>
</feature>
<feature type="strand" evidence="7">
    <location>
        <begin position="241"/>
        <end position="253"/>
    </location>
</feature>
<feature type="strand" evidence="7">
    <location>
        <begin position="259"/>
        <end position="266"/>
    </location>
</feature>
<feature type="turn" evidence="7">
    <location>
        <begin position="276"/>
        <end position="278"/>
    </location>
</feature>
<feature type="strand" evidence="7">
    <location>
        <begin position="287"/>
        <end position="297"/>
    </location>
</feature>
<feature type="strand" evidence="7">
    <location>
        <begin position="300"/>
        <end position="303"/>
    </location>
</feature>
<feature type="strand" evidence="7">
    <location>
        <begin position="311"/>
        <end position="313"/>
    </location>
</feature>
<feature type="strand" evidence="7">
    <location>
        <begin position="329"/>
        <end position="331"/>
    </location>
</feature>
<feature type="strand" evidence="7">
    <location>
        <begin position="335"/>
        <end position="337"/>
    </location>
</feature>
<feature type="strand" evidence="7">
    <location>
        <begin position="343"/>
        <end position="347"/>
    </location>
</feature>
<feature type="turn" evidence="7">
    <location>
        <begin position="351"/>
        <end position="353"/>
    </location>
</feature>
<feature type="strand" evidence="7">
    <location>
        <begin position="354"/>
        <end position="359"/>
    </location>
</feature>
<feature type="strand" evidence="7">
    <location>
        <begin position="362"/>
        <end position="366"/>
    </location>
</feature>
<feature type="strand" evidence="7">
    <location>
        <begin position="378"/>
        <end position="383"/>
    </location>
</feature>
<feature type="strand" evidence="7">
    <location>
        <begin position="387"/>
        <end position="396"/>
    </location>
</feature>
<feature type="strand" evidence="7">
    <location>
        <begin position="404"/>
        <end position="413"/>
    </location>
</feature>
<feature type="strand" evidence="7">
    <location>
        <begin position="416"/>
        <end position="425"/>
    </location>
</feature>
<feature type="turn" evidence="7">
    <location>
        <begin position="426"/>
        <end position="428"/>
    </location>
</feature>
<feature type="strand" evidence="7">
    <location>
        <begin position="429"/>
        <end position="438"/>
    </location>
</feature>
<feature type="strand" evidence="7">
    <location>
        <begin position="441"/>
        <end position="443"/>
    </location>
</feature>
<feature type="strand" evidence="7">
    <location>
        <begin position="459"/>
        <end position="466"/>
    </location>
</feature>
<feature type="strand" evidence="7">
    <location>
        <begin position="469"/>
        <end position="479"/>
    </location>
</feature>
<feature type="strand" evidence="7">
    <location>
        <begin position="482"/>
        <end position="489"/>
    </location>
</feature>
<feature type="helix" evidence="7">
    <location>
        <begin position="490"/>
        <end position="493"/>
    </location>
</feature>
<feature type="turn" evidence="7">
    <location>
        <begin position="495"/>
        <end position="497"/>
    </location>
</feature>
<feature type="strand" evidence="7">
    <location>
        <begin position="508"/>
        <end position="515"/>
    </location>
</feature>
<feature type="strand" evidence="7">
    <location>
        <begin position="522"/>
        <end position="532"/>
    </location>
</feature>
<dbReference type="EC" id="3.2.1.37"/>
<dbReference type="EMBL" id="U66480">
    <property type="protein sequence ID" value="AAB41091.1"/>
    <property type="molecule type" value="Genomic_DNA"/>
</dbReference>
<dbReference type="EMBL" id="AL009126">
    <property type="protein sequence ID" value="CAB13642.2"/>
    <property type="molecule type" value="Genomic_DNA"/>
</dbReference>
<dbReference type="PIR" id="G69735">
    <property type="entry name" value="G69735"/>
</dbReference>
<dbReference type="RefSeq" id="NP_389640.2">
    <property type="nucleotide sequence ID" value="NC_000964.3"/>
</dbReference>
<dbReference type="RefSeq" id="WP_003245202.1">
    <property type="nucleotide sequence ID" value="NZ_OZ025638.1"/>
</dbReference>
<dbReference type="PDB" id="1YIF">
    <property type="method" value="X-ray"/>
    <property type="resolution" value="1.80 A"/>
    <property type="chains" value="A/B/C/D=1-533"/>
</dbReference>
<dbReference type="PDBsum" id="1YIF"/>
<dbReference type="SMR" id="P94489"/>
<dbReference type="FunCoup" id="P94489">
    <property type="interactions" value="107"/>
</dbReference>
<dbReference type="STRING" id="224308.BSU17580"/>
<dbReference type="CAZy" id="GH43">
    <property type="family name" value="Glycoside Hydrolase Family 43"/>
</dbReference>
<dbReference type="PaxDb" id="224308-BSU17580"/>
<dbReference type="DNASU" id="939472"/>
<dbReference type="EnsemblBacteria" id="CAB13642">
    <property type="protein sequence ID" value="CAB13642"/>
    <property type="gene ID" value="BSU_17580"/>
</dbReference>
<dbReference type="GeneID" id="939472"/>
<dbReference type="KEGG" id="bsu:BSU17580"/>
<dbReference type="PATRIC" id="fig|224308.179.peg.1908"/>
<dbReference type="eggNOG" id="COG3507">
    <property type="taxonomic scope" value="Bacteria"/>
</dbReference>
<dbReference type="InParanoid" id="P94489"/>
<dbReference type="OrthoDB" id="9801455at2"/>
<dbReference type="PhylomeDB" id="P94489"/>
<dbReference type="BioCyc" id="BSUB:BSU17580-MONOMER"/>
<dbReference type="BRENDA" id="3.2.1.37">
    <property type="organism ID" value="658"/>
</dbReference>
<dbReference type="EvolutionaryTrace" id="P94489"/>
<dbReference type="Proteomes" id="UP000001570">
    <property type="component" value="Chromosome"/>
</dbReference>
<dbReference type="GO" id="GO:0005886">
    <property type="term" value="C:plasma membrane"/>
    <property type="evidence" value="ECO:0007669"/>
    <property type="project" value="UniProtKB-SubCell"/>
</dbReference>
<dbReference type="GO" id="GO:0009044">
    <property type="term" value="F:xylan 1,4-beta-xylosidase activity"/>
    <property type="evidence" value="ECO:0007669"/>
    <property type="project" value="UniProtKB-EC"/>
</dbReference>
<dbReference type="GO" id="GO:0045493">
    <property type="term" value="P:xylan catabolic process"/>
    <property type="evidence" value="ECO:0007669"/>
    <property type="project" value="UniProtKB-KW"/>
</dbReference>
<dbReference type="CDD" id="cd09000">
    <property type="entry name" value="GH43_SXA-like"/>
    <property type="match status" value="1"/>
</dbReference>
<dbReference type="Gene3D" id="2.60.120.200">
    <property type="match status" value="1"/>
</dbReference>
<dbReference type="Gene3D" id="2.115.10.20">
    <property type="entry name" value="Glycosyl hydrolase domain, family 43"/>
    <property type="match status" value="1"/>
</dbReference>
<dbReference type="InterPro" id="IPR013320">
    <property type="entry name" value="ConA-like_dom_sf"/>
</dbReference>
<dbReference type="InterPro" id="IPR041542">
    <property type="entry name" value="GH43_C2"/>
</dbReference>
<dbReference type="InterPro" id="IPR006710">
    <property type="entry name" value="Glyco_hydro_43"/>
</dbReference>
<dbReference type="InterPro" id="IPR023296">
    <property type="entry name" value="Glyco_hydro_beta-prop_sf"/>
</dbReference>
<dbReference type="InterPro" id="IPR051795">
    <property type="entry name" value="Glycosyl_Hydrlase_43"/>
</dbReference>
<dbReference type="PANTHER" id="PTHR42812">
    <property type="entry name" value="BETA-XYLOSIDASE"/>
    <property type="match status" value="1"/>
</dbReference>
<dbReference type="PANTHER" id="PTHR42812:SF12">
    <property type="entry name" value="BETA-XYLOSIDASE-RELATED"/>
    <property type="match status" value="1"/>
</dbReference>
<dbReference type="Pfam" id="PF17851">
    <property type="entry name" value="GH43_C2"/>
    <property type="match status" value="1"/>
</dbReference>
<dbReference type="Pfam" id="PF04616">
    <property type="entry name" value="Glyco_hydro_43"/>
    <property type="match status" value="1"/>
</dbReference>
<dbReference type="SUPFAM" id="SSF75005">
    <property type="entry name" value="Arabinanase/levansucrase/invertase"/>
    <property type="match status" value="1"/>
</dbReference>
<dbReference type="SUPFAM" id="SSF49899">
    <property type="entry name" value="Concanavalin A-like lectins/glucanases"/>
    <property type="match status" value="1"/>
</dbReference>
<proteinExistence type="evidence at protein level"/>
<gene>
    <name type="primary">xynB</name>
    <name type="ordered locus">BSU17580</name>
</gene>
<name>XYNB_BACSU</name>
<keyword id="KW-0002">3D-structure</keyword>
<keyword id="KW-0119">Carbohydrate metabolism</keyword>
<keyword id="KW-1003">Cell membrane</keyword>
<keyword id="KW-0326">Glycosidase</keyword>
<keyword id="KW-0378">Hydrolase</keyword>
<keyword id="KW-0472">Membrane</keyword>
<keyword id="KW-0624">Polysaccharide degradation</keyword>
<keyword id="KW-1185">Reference proteome</keyword>
<keyword id="KW-0858">Xylan degradation</keyword>
<sequence length="533" mass="61366">MKITNPVLKGFNPDPSICRAGEDYYIAVSTFEWFPGVQIHHSKDLVNWHLVAHPLQRVSQLDMKGNPNSGGVWAPCLSYSDGKFWLIYTDVKVVDGAWKDCHNYLVTCETINGDWSEPIKLNSSGFDASLFHDTDGKKYLLNMLWDHRIDRHSFGGIVIQEYSDKEQKLIGKPKVIFEGTDRKLTEAPHLYHIGNYYYLLTAEGGTRYEHAATIARSANIEGPYEVHPDNPILTSWHDPGNPLQKCGHASIVQTHTDEWYLAHLTGRPIHPDDDSIFQQRGYCPLGRETAIQKLYWKDEWPYVVGGKEGSLEVDAPSIPETIFEATYPEVDEFEDSTLNINFQTLRIPFTNELGSLTQAPNHLRLFGHESLTSTFTQAFVARRWQSLHFEAETAVEFYPENFQQAAGLVNYYNTENWTALQVTHDEELGRILELTICDNFSFSQPLNNKIVIPREVKYVYLRVNIEKDKYYYFYSFNKEDWHKIDIALESKKLSDDYIRGGGFFTGAFVGMQCQDTSGNHIPADFRYFRYKEK</sequence>
<comment type="catalytic activity">
    <reaction evidence="2">
        <text>Hydrolysis of (1-&gt;4)-beta-D-xylans, to remove successive D-xylose residues from the non-reducing termini.</text>
        <dbReference type="EC" id="3.2.1.37"/>
    </reaction>
</comment>
<comment type="subunit">
    <text evidence="6">Homodimer.</text>
</comment>
<comment type="subcellular location">
    <subcellularLocation>
        <location evidence="5">Cell membrane</location>
        <topology evidence="5">Peripheral membrane protein</topology>
    </subcellularLocation>
</comment>
<comment type="induction">
    <text evidence="3">Up-regulated by xylose. Subject to carbon catabolite repression (CCR).</text>
</comment>
<comment type="similarity">
    <text evidence="4">Belongs to the glycosyl hydrolase 43 family.</text>
</comment>
<protein>
    <recommendedName>
        <fullName>Beta-xylosidase</fullName>
        <ecNumber>3.2.1.37</ecNumber>
    </recommendedName>
    <alternativeName>
        <fullName>1,4-beta-D-xylan xylohydrolase</fullName>
    </alternativeName>
    <alternativeName>
        <fullName>Xylan 1,4-beta-xylosidase</fullName>
    </alternativeName>
</protein>